<organism>
    <name type="scientific">Yersinia pestis bv. Antiqua (strain Angola)</name>
    <dbReference type="NCBI Taxonomy" id="349746"/>
    <lineage>
        <taxon>Bacteria</taxon>
        <taxon>Pseudomonadati</taxon>
        <taxon>Pseudomonadota</taxon>
        <taxon>Gammaproteobacteria</taxon>
        <taxon>Enterobacterales</taxon>
        <taxon>Yersiniaceae</taxon>
        <taxon>Yersinia</taxon>
    </lineage>
</organism>
<name>TRPA_YERPG</name>
<accession>A9R995</accession>
<gene>
    <name evidence="1" type="primary">trpA</name>
    <name type="ordered locus">YpAngola_A2317</name>
</gene>
<proteinExistence type="inferred from homology"/>
<evidence type="ECO:0000255" key="1">
    <source>
        <dbReference type="HAMAP-Rule" id="MF_00131"/>
    </source>
</evidence>
<feature type="chain" id="PRO_1000095766" description="Tryptophan synthase alpha chain">
    <location>
        <begin position="1"/>
        <end position="271"/>
    </location>
</feature>
<feature type="active site" description="Proton acceptor" evidence="1">
    <location>
        <position position="49"/>
    </location>
</feature>
<feature type="active site" description="Proton acceptor" evidence="1">
    <location>
        <position position="60"/>
    </location>
</feature>
<sequence>MERYQQLFKQLAAKKEGAFVPFVQLGDPSPAMSLNIIDTLIAAGADALELGIPFSDPLADGPTIQNAALRAFAAGVTPGICFEILAEIRQKHPTIPIGLLMYANLVFHNGIDHFYQRCAEVGVDSVLIADVPFEESAPFRAAALRHGIAPIFICPPNADDDLLREIASHGRGYTYLLSRAGVTGAENHGQLPLNHLVDKLREYNAAPALQGFGISEPAQVKASLAAGAAGAAGAISGSAIVKIIEKNVAQPVEMLVQLTRFVTEMKAATRS</sequence>
<keyword id="KW-0028">Amino-acid biosynthesis</keyword>
<keyword id="KW-0057">Aromatic amino acid biosynthesis</keyword>
<keyword id="KW-0456">Lyase</keyword>
<keyword id="KW-0822">Tryptophan biosynthesis</keyword>
<dbReference type="EC" id="4.2.1.20" evidence="1"/>
<dbReference type="EMBL" id="CP000901">
    <property type="protein sequence ID" value="ABX87727.1"/>
    <property type="molecule type" value="Genomic_DNA"/>
</dbReference>
<dbReference type="RefSeq" id="WP_012229670.1">
    <property type="nucleotide sequence ID" value="NC_010159.1"/>
</dbReference>
<dbReference type="SMR" id="A9R995"/>
<dbReference type="KEGG" id="ypg:YpAngola_A2317"/>
<dbReference type="PATRIC" id="fig|349746.12.peg.3328"/>
<dbReference type="UniPathway" id="UPA00035">
    <property type="reaction ID" value="UER00044"/>
</dbReference>
<dbReference type="GO" id="GO:0005829">
    <property type="term" value="C:cytosol"/>
    <property type="evidence" value="ECO:0007669"/>
    <property type="project" value="TreeGrafter"/>
</dbReference>
<dbReference type="GO" id="GO:0004834">
    <property type="term" value="F:tryptophan synthase activity"/>
    <property type="evidence" value="ECO:0007669"/>
    <property type="project" value="UniProtKB-UniRule"/>
</dbReference>
<dbReference type="CDD" id="cd04724">
    <property type="entry name" value="Tryptophan_synthase_alpha"/>
    <property type="match status" value="1"/>
</dbReference>
<dbReference type="FunFam" id="3.20.20.70:FF:000037">
    <property type="entry name" value="Tryptophan synthase alpha chain"/>
    <property type="match status" value="1"/>
</dbReference>
<dbReference type="Gene3D" id="3.20.20.70">
    <property type="entry name" value="Aldolase class I"/>
    <property type="match status" value="1"/>
</dbReference>
<dbReference type="HAMAP" id="MF_00131">
    <property type="entry name" value="Trp_synth_alpha"/>
    <property type="match status" value="1"/>
</dbReference>
<dbReference type="InterPro" id="IPR013785">
    <property type="entry name" value="Aldolase_TIM"/>
</dbReference>
<dbReference type="InterPro" id="IPR011060">
    <property type="entry name" value="RibuloseP-bd_barrel"/>
</dbReference>
<dbReference type="InterPro" id="IPR018204">
    <property type="entry name" value="Trp_synthase_alpha_AS"/>
</dbReference>
<dbReference type="InterPro" id="IPR002028">
    <property type="entry name" value="Trp_synthase_suA"/>
</dbReference>
<dbReference type="NCBIfam" id="TIGR00262">
    <property type="entry name" value="trpA"/>
    <property type="match status" value="1"/>
</dbReference>
<dbReference type="PANTHER" id="PTHR43406:SF1">
    <property type="entry name" value="TRYPTOPHAN SYNTHASE ALPHA CHAIN, CHLOROPLASTIC"/>
    <property type="match status" value="1"/>
</dbReference>
<dbReference type="PANTHER" id="PTHR43406">
    <property type="entry name" value="TRYPTOPHAN SYNTHASE, ALPHA CHAIN"/>
    <property type="match status" value="1"/>
</dbReference>
<dbReference type="Pfam" id="PF00290">
    <property type="entry name" value="Trp_syntA"/>
    <property type="match status" value="1"/>
</dbReference>
<dbReference type="SUPFAM" id="SSF51366">
    <property type="entry name" value="Ribulose-phoshate binding barrel"/>
    <property type="match status" value="1"/>
</dbReference>
<dbReference type="PROSITE" id="PS00167">
    <property type="entry name" value="TRP_SYNTHASE_ALPHA"/>
    <property type="match status" value="1"/>
</dbReference>
<reference key="1">
    <citation type="journal article" date="2010" name="J. Bacteriol.">
        <title>Genome sequence of the deep-rooted Yersinia pestis strain Angola reveals new insights into the evolution and pangenome of the plague bacterium.</title>
        <authorList>
            <person name="Eppinger M."/>
            <person name="Worsham P.L."/>
            <person name="Nikolich M.P."/>
            <person name="Riley D.R."/>
            <person name="Sebastian Y."/>
            <person name="Mou S."/>
            <person name="Achtman M."/>
            <person name="Lindler L.E."/>
            <person name="Ravel J."/>
        </authorList>
    </citation>
    <scope>NUCLEOTIDE SEQUENCE [LARGE SCALE GENOMIC DNA]</scope>
    <source>
        <strain>Angola</strain>
    </source>
</reference>
<protein>
    <recommendedName>
        <fullName evidence="1">Tryptophan synthase alpha chain</fullName>
        <ecNumber evidence="1">4.2.1.20</ecNumber>
    </recommendedName>
</protein>
<comment type="function">
    <text evidence="1">The alpha subunit is responsible for the aldol cleavage of indoleglycerol phosphate to indole and glyceraldehyde 3-phosphate.</text>
</comment>
<comment type="catalytic activity">
    <reaction evidence="1">
        <text>(1S,2R)-1-C-(indol-3-yl)glycerol 3-phosphate + L-serine = D-glyceraldehyde 3-phosphate + L-tryptophan + H2O</text>
        <dbReference type="Rhea" id="RHEA:10532"/>
        <dbReference type="ChEBI" id="CHEBI:15377"/>
        <dbReference type="ChEBI" id="CHEBI:33384"/>
        <dbReference type="ChEBI" id="CHEBI:57912"/>
        <dbReference type="ChEBI" id="CHEBI:58866"/>
        <dbReference type="ChEBI" id="CHEBI:59776"/>
        <dbReference type="EC" id="4.2.1.20"/>
    </reaction>
</comment>
<comment type="pathway">
    <text evidence="1">Amino-acid biosynthesis; L-tryptophan biosynthesis; L-tryptophan from chorismate: step 5/5.</text>
</comment>
<comment type="subunit">
    <text evidence="1">Tetramer of two alpha and two beta chains.</text>
</comment>
<comment type="similarity">
    <text evidence="1">Belongs to the TrpA family.</text>
</comment>